<proteinExistence type="inferred from homology"/>
<keyword id="KW-0520">NAD</keyword>
<keyword id="KW-0560">Oxidoreductase</keyword>
<keyword id="KW-1185">Reference proteome</keyword>
<keyword id="KW-0843">Virulence</keyword>
<organism>
    <name type="scientific">Vibrio cholerae serotype O1 (strain ATCC 39315 / El Tor Inaba N16961)</name>
    <dbReference type="NCBI Taxonomy" id="243277"/>
    <lineage>
        <taxon>Bacteria</taxon>
        <taxon>Pseudomonadati</taxon>
        <taxon>Pseudomonadota</taxon>
        <taxon>Gammaproteobacteria</taxon>
        <taxon>Vibrionales</taxon>
        <taxon>Vibrionaceae</taxon>
        <taxon>Vibrio</taxon>
    </lineage>
</organism>
<feature type="chain" id="PRO_0000056465" description="Aldehyde dehydrogenase">
    <location>
        <begin position="1"/>
        <end position="506"/>
    </location>
</feature>
<feature type="active site" evidence="1">
    <location>
        <position position="262"/>
    </location>
</feature>
<feature type="active site" evidence="1">
    <location>
        <position position="301"/>
    </location>
</feature>
<feature type="binding site" evidence="1">
    <location>
        <begin position="240"/>
        <end position="245"/>
    </location>
    <ligand>
        <name>NAD(+)</name>
        <dbReference type="ChEBI" id="CHEBI:57540"/>
    </ligand>
</feature>
<accession>P0C6D7</accession>
<accession>P23240</accession>
<accession>Q9KTS0</accession>
<protein>
    <recommendedName>
        <fullName>Aldehyde dehydrogenase</fullName>
        <ecNumber>1.2.1.3</ecNumber>
    </recommendedName>
</protein>
<gene>
    <name type="primary">aldA</name>
    <name type="ordered locus">VC_0819</name>
</gene>
<dbReference type="EC" id="1.2.1.3"/>
<dbReference type="EMBL" id="M60658">
    <property type="protein sequence ID" value="AAA03051.1"/>
    <property type="molecule type" value="Unassigned_DNA"/>
</dbReference>
<dbReference type="EMBL" id="AF034434">
    <property type="protein sequence ID" value="AAC12273.1"/>
    <property type="molecule type" value="Genomic_DNA"/>
</dbReference>
<dbReference type="EMBL" id="AE003852">
    <property type="protein sequence ID" value="AAF93982.1"/>
    <property type="status" value="ALT_INIT"/>
    <property type="molecule type" value="Genomic_DNA"/>
</dbReference>
<dbReference type="PIR" id="A82276">
    <property type="entry name" value="A82276"/>
</dbReference>
<dbReference type="PIR" id="T09437">
    <property type="entry name" value="T09437"/>
</dbReference>
<dbReference type="RefSeq" id="WP_000640055.1">
    <property type="nucleotide sequence ID" value="NZ_LT906614.1"/>
</dbReference>
<dbReference type="SMR" id="P0C6D7"/>
<dbReference type="STRING" id="243277.VC_0819"/>
<dbReference type="DNASU" id="2614486"/>
<dbReference type="EnsemblBacteria" id="AAF93982">
    <property type="protein sequence ID" value="AAF93982"/>
    <property type="gene ID" value="VC_0819"/>
</dbReference>
<dbReference type="KEGG" id="vch:VC_0819"/>
<dbReference type="eggNOG" id="COG1012">
    <property type="taxonomic scope" value="Bacteria"/>
</dbReference>
<dbReference type="HOGENOM" id="CLU_005391_0_2_6"/>
<dbReference type="UniPathway" id="UPA00780">
    <property type="reaction ID" value="UER00768"/>
</dbReference>
<dbReference type="Proteomes" id="UP000000584">
    <property type="component" value="Chromosome 1"/>
</dbReference>
<dbReference type="GO" id="GO:0004029">
    <property type="term" value="F:aldehyde dehydrogenase (NAD+) activity"/>
    <property type="evidence" value="ECO:0007669"/>
    <property type="project" value="UniProtKB-EC"/>
</dbReference>
<dbReference type="GO" id="GO:0006068">
    <property type="term" value="P:ethanol catabolic process"/>
    <property type="evidence" value="ECO:0007669"/>
    <property type="project" value="UniProtKB-UniPathway"/>
</dbReference>
<dbReference type="CDD" id="cd07559">
    <property type="entry name" value="ALDH_ACDHII_AcoD-like"/>
    <property type="match status" value="1"/>
</dbReference>
<dbReference type="FunFam" id="3.40.605.10:FF:000001">
    <property type="entry name" value="Aldehyde dehydrogenase 1"/>
    <property type="match status" value="1"/>
</dbReference>
<dbReference type="FunFam" id="3.40.309.10:FF:000012">
    <property type="entry name" value="Betaine aldehyde dehydrogenase"/>
    <property type="match status" value="1"/>
</dbReference>
<dbReference type="Gene3D" id="3.40.605.10">
    <property type="entry name" value="Aldehyde Dehydrogenase, Chain A, domain 1"/>
    <property type="match status" value="1"/>
</dbReference>
<dbReference type="Gene3D" id="3.40.309.10">
    <property type="entry name" value="Aldehyde Dehydrogenase, Chain A, domain 2"/>
    <property type="match status" value="1"/>
</dbReference>
<dbReference type="InterPro" id="IPR016161">
    <property type="entry name" value="Ald_DH/histidinol_DH"/>
</dbReference>
<dbReference type="InterPro" id="IPR016163">
    <property type="entry name" value="Ald_DH_C"/>
</dbReference>
<dbReference type="InterPro" id="IPR016160">
    <property type="entry name" value="Ald_DH_CS_CYS"/>
</dbReference>
<dbReference type="InterPro" id="IPR029510">
    <property type="entry name" value="Ald_DH_CS_GLU"/>
</dbReference>
<dbReference type="InterPro" id="IPR016162">
    <property type="entry name" value="Ald_DH_N"/>
</dbReference>
<dbReference type="InterPro" id="IPR015590">
    <property type="entry name" value="Aldehyde_DH_dom"/>
</dbReference>
<dbReference type="PANTHER" id="PTHR43111">
    <property type="entry name" value="ALDEHYDE DEHYDROGENASE B-RELATED"/>
    <property type="match status" value="1"/>
</dbReference>
<dbReference type="PANTHER" id="PTHR43111:SF1">
    <property type="entry name" value="ALDEHYDE DEHYDROGENASE B-RELATED"/>
    <property type="match status" value="1"/>
</dbReference>
<dbReference type="Pfam" id="PF00171">
    <property type="entry name" value="Aldedh"/>
    <property type="match status" value="1"/>
</dbReference>
<dbReference type="SUPFAM" id="SSF53720">
    <property type="entry name" value="ALDH-like"/>
    <property type="match status" value="1"/>
</dbReference>
<dbReference type="PROSITE" id="PS00070">
    <property type="entry name" value="ALDEHYDE_DEHYDR_CYS"/>
    <property type="match status" value="1"/>
</dbReference>
<dbReference type="PROSITE" id="PS00687">
    <property type="entry name" value="ALDEHYDE_DEHYDR_GLU"/>
    <property type="match status" value="1"/>
</dbReference>
<reference key="1">
    <citation type="journal article" date="1991" name="J. Bacteriol.">
        <title>Expression of the Vibrio cholerae gene encoding aldehyde dehydrogenase is under control of ToxR, the cholera toxin transcriptional activator.</title>
        <authorList>
            <person name="Parsot C.R."/>
            <person name="Mekalanos J.J."/>
        </authorList>
    </citation>
    <scope>NUCLEOTIDE SEQUENCE [GENOMIC DNA]</scope>
    <source>
        <strain>KP8.56</strain>
    </source>
</reference>
<reference key="2">
    <citation type="journal article" date="1998" name="Proc. Natl. Acad. Sci. U.S.A.">
        <title>A Vibrio cholerae pathogenicity island associated with epidemic and pandemic strains.</title>
        <authorList>
            <person name="Karaolis D.K.R."/>
            <person name="Johnson J.A."/>
            <person name="Bailey C.C."/>
            <person name="Boedeker E.C."/>
            <person name="Kaper J.B."/>
            <person name="Reeves P.R."/>
        </authorList>
    </citation>
    <scope>NUCLEOTIDE SEQUENCE [GENOMIC DNA]</scope>
    <source>
        <strain>ATCC 39315 / El Tor Inaba N16961</strain>
    </source>
</reference>
<reference key="3">
    <citation type="journal article" date="2000" name="Nature">
        <title>DNA sequence of both chromosomes of the cholera pathogen Vibrio cholerae.</title>
        <authorList>
            <person name="Heidelberg J.F."/>
            <person name="Eisen J.A."/>
            <person name="Nelson W.C."/>
            <person name="Clayton R.A."/>
            <person name="Gwinn M.L."/>
            <person name="Dodson R.J."/>
            <person name="Haft D.H."/>
            <person name="Hickey E.K."/>
            <person name="Peterson J.D."/>
            <person name="Umayam L.A."/>
            <person name="Gill S.R."/>
            <person name="Nelson K.E."/>
            <person name="Read T.D."/>
            <person name="Tettelin H."/>
            <person name="Richardson D.L."/>
            <person name="Ermolaeva M.D."/>
            <person name="Vamathevan J.J."/>
            <person name="Bass S."/>
            <person name="Qin H."/>
            <person name="Dragoi I."/>
            <person name="Sellers P."/>
            <person name="McDonald L.A."/>
            <person name="Utterback T.R."/>
            <person name="Fleischmann R.D."/>
            <person name="Nierman W.C."/>
            <person name="White O."/>
            <person name="Salzberg S.L."/>
            <person name="Smith H.O."/>
            <person name="Colwell R.R."/>
            <person name="Mekalanos J.J."/>
            <person name="Venter J.C."/>
            <person name="Fraser C.M."/>
        </authorList>
    </citation>
    <scope>NUCLEOTIDE SEQUENCE [LARGE SCALE GENOMIC DNA]</scope>
    <source>
        <strain>ATCC 39315 / El Tor Inaba N16961</strain>
    </source>
</reference>
<comment type="function">
    <text>May be involved in V.cholerae virulence, as its expression is under the control of ToxR, a transcriptional activator of several genes associated with virulence.</text>
</comment>
<comment type="catalytic activity">
    <reaction>
        <text>an aldehyde + NAD(+) + H2O = a carboxylate + NADH + 2 H(+)</text>
        <dbReference type="Rhea" id="RHEA:16185"/>
        <dbReference type="ChEBI" id="CHEBI:15377"/>
        <dbReference type="ChEBI" id="CHEBI:15378"/>
        <dbReference type="ChEBI" id="CHEBI:17478"/>
        <dbReference type="ChEBI" id="CHEBI:29067"/>
        <dbReference type="ChEBI" id="CHEBI:57540"/>
        <dbReference type="ChEBI" id="CHEBI:57945"/>
        <dbReference type="EC" id="1.2.1.3"/>
    </reaction>
</comment>
<comment type="pathway">
    <text>Alcohol metabolism; ethanol degradation; acetate from ethanol: step 2/2.</text>
</comment>
<comment type="similarity">
    <text evidence="2">Belongs to the aldehyde dehydrogenase family.</text>
</comment>
<comment type="sequence caution" evidence="2">
    <conflict type="erroneous initiation">
        <sequence resource="EMBL-CDS" id="AAF93982"/>
    </conflict>
</comment>
<evidence type="ECO:0000250" key="1"/>
<evidence type="ECO:0000305" key="2"/>
<sequence>MIYPIPNSETSTVHFKDVYDNYIGGQWMKPHSGEYFSNTSPVNGLVFCRVARSSSQDVELALDAAHNALESWSTTSAVERSNILLRIADRIESNLETLAIVESWDNGKPIRETLAADLPLTIDHFRYFAACIRSQEGAASELDSRTLTYHLPEPIGVVGQIIPWNFPLLMAAWKLAPALAAGCTVVLKPAEQTPVSILFLMEIIGDLIPAGVINVVNGFGSEAGNALATSQRIDKLAFTGSTEIGNHILKCAADNLIPSTIELGGKSPNIYFPDIFSHEDQYLDKCIEGALLAFFNQGEVCTCPSRILVHESIYEKFIAKIIERVALIKQGNPLDTETQIGAQVSKEQYDKILGYIQIGKDEGAELIFGGHPNNQENYLSGGYYIKPTLFFGHNQMHIFQEEIFGPVIAITKFKDEIEALHLANDTVYGLGAGVWTRDINIAHRMAKNIKAGRVWVNCYHAYPAHAAFGGYKKSGIGRETHKLTLSHYQNIKNVLISHEIHPLGLF</sequence>
<name>ALDH_VIBCH</name>